<evidence type="ECO:0000255" key="1">
    <source>
        <dbReference type="HAMAP-Rule" id="MF_00043"/>
    </source>
</evidence>
<feature type="chain" id="PRO_1000202142" description="Elongation factor 1-beta">
    <location>
        <begin position="1"/>
        <end position="91"/>
    </location>
</feature>
<keyword id="KW-0251">Elongation factor</keyword>
<keyword id="KW-0648">Protein biosynthesis</keyword>
<comment type="function">
    <text evidence="1">Promotes the exchange of GDP for GTP in EF-1-alpha/GDP, thus allowing the regeneration of EF-1-alpha/GTP that could then be used to form the ternary complex EF-1-alpha/GTP/AAtRNA.</text>
</comment>
<comment type="similarity">
    <text evidence="1">Belongs to the EF-1-beta/EF-1-delta family.</text>
</comment>
<protein>
    <recommendedName>
        <fullName evidence="1">Elongation factor 1-beta</fullName>
        <shortName evidence="1">EF-1-beta</shortName>
    </recommendedName>
    <alternativeName>
        <fullName evidence="1">aEF-1beta</fullName>
    </alternativeName>
</protein>
<sequence length="91" mass="10192">MTDVLVVLKVFPDSDEVNLDNLYTDISNKLPKEYRIIRKETEPIAFGLNALILYVQMPEQTEGGTDNLEEVVNNIQGVSHAEVVGITRLGF</sequence>
<name>EF1B_SACI3</name>
<proteinExistence type="inferred from homology"/>
<reference key="1">
    <citation type="journal article" date="2009" name="Proc. Natl. Acad. Sci. U.S.A.">
        <title>Biogeography of the Sulfolobus islandicus pan-genome.</title>
        <authorList>
            <person name="Reno M.L."/>
            <person name="Held N.L."/>
            <person name="Fields C.J."/>
            <person name="Burke P.V."/>
            <person name="Whitaker R.J."/>
        </authorList>
    </citation>
    <scope>NUCLEOTIDE SEQUENCE [LARGE SCALE GENOMIC DNA]</scope>
    <source>
        <strain>M.16.27</strain>
    </source>
</reference>
<gene>
    <name evidence="1" type="primary">ef1b</name>
    <name type="ordered locus">M1627_2038</name>
</gene>
<organism>
    <name type="scientific">Saccharolobus islandicus (strain M.16.27)</name>
    <name type="common">Sulfolobus islandicus</name>
    <dbReference type="NCBI Taxonomy" id="427318"/>
    <lineage>
        <taxon>Archaea</taxon>
        <taxon>Thermoproteota</taxon>
        <taxon>Thermoprotei</taxon>
        <taxon>Sulfolobales</taxon>
        <taxon>Sulfolobaceae</taxon>
        <taxon>Saccharolobus</taxon>
    </lineage>
</organism>
<accession>C3MZS5</accession>
<dbReference type="EMBL" id="CP001401">
    <property type="protein sequence ID" value="ACP55907.1"/>
    <property type="molecule type" value="Genomic_DNA"/>
</dbReference>
<dbReference type="RefSeq" id="WP_012711931.1">
    <property type="nucleotide sequence ID" value="NC_012632.1"/>
</dbReference>
<dbReference type="SMR" id="C3MZS5"/>
<dbReference type="KEGG" id="sim:M1627_2038"/>
<dbReference type="HOGENOM" id="CLU_165896_1_0_2"/>
<dbReference type="Proteomes" id="UP000002307">
    <property type="component" value="Chromosome"/>
</dbReference>
<dbReference type="GO" id="GO:0003746">
    <property type="term" value="F:translation elongation factor activity"/>
    <property type="evidence" value="ECO:0007669"/>
    <property type="project" value="UniProtKB-UniRule"/>
</dbReference>
<dbReference type="CDD" id="cd00292">
    <property type="entry name" value="EF1B"/>
    <property type="match status" value="1"/>
</dbReference>
<dbReference type="Gene3D" id="3.30.70.60">
    <property type="match status" value="1"/>
</dbReference>
<dbReference type="HAMAP" id="MF_00043">
    <property type="entry name" value="EF1_beta"/>
    <property type="match status" value="1"/>
</dbReference>
<dbReference type="InterPro" id="IPR036219">
    <property type="entry name" value="eEF-1beta-like_sf"/>
</dbReference>
<dbReference type="InterPro" id="IPR014038">
    <property type="entry name" value="EF1B_bsu/dsu_GNE"/>
</dbReference>
<dbReference type="InterPro" id="IPR014717">
    <property type="entry name" value="Transl_elong_EF1B/ribsomal_bS6"/>
</dbReference>
<dbReference type="InterPro" id="IPR004542">
    <property type="entry name" value="Transl_elong_EF1B_B_arc"/>
</dbReference>
<dbReference type="NCBIfam" id="TIGR00489">
    <property type="entry name" value="aEF-1_beta"/>
    <property type="match status" value="1"/>
</dbReference>
<dbReference type="NCBIfam" id="NF001670">
    <property type="entry name" value="PRK00435.1"/>
    <property type="match status" value="1"/>
</dbReference>
<dbReference type="PANTHER" id="PTHR39647">
    <property type="entry name" value="ELONGATION FACTOR 1-BETA"/>
    <property type="match status" value="1"/>
</dbReference>
<dbReference type="PANTHER" id="PTHR39647:SF1">
    <property type="entry name" value="ELONGATION FACTOR 1-BETA"/>
    <property type="match status" value="1"/>
</dbReference>
<dbReference type="Pfam" id="PF00736">
    <property type="entry name" value="EF1_GNE"/>
    <property type="match status" value="1"/>
</dbReference>
<dbReference type="PIRSF" id="PIRSF006521">
    <property type="entry name" value="Transl_elong_EF1B_B_arc"/>
    <property type="match status" value="1"/>
</dbReference>
<dbReference type="SMART" id="SM00888">
    <property type="entry name" value="EF1_GNE"/>
    <property type="match status" value="1"/>
</dbReference>
<dbReference type="SUPFAM" id="SSF54984">
    <property type="entry name" value="eEF-1beta-like"/>
    <property type="match status" value="1"/>
</dbReference>